<gene>
    <name type="primary">Gipr</name>
</gene>
<dbReference type="EMBL" id="AC145199">
    <property type="status" value="NOT_ANNOTATED_CDS"/>
    <property type="molecule type" value="Genomic_DNA"/>
</dbReference>
<dbReference type="EMBL" id="BC120671">
    <property type="protein sequence ID" value="AAI20672.1"/>
    <property type="molecule type" value="mRNA"/>
</dbReference>
<dbReference type="EMBL" id="BC120673">
    <property type="protein sequence ID" value="AAI20674.1"/>
    <property type="molecule type" value="mRNA"/>
</dbReference>
<dbReference type="EMBL" id="AY255568">
    <property type="protein sequence ID" value="AAO85080.1"/>
    <property type="molecule type" value="mRNA"/>
</dbReference>
<dbReference type="CCDS" id="CCDS39795.1">
    <molecule id="Q0P543-1"/>
</dbReference>
<dbReference type="RefSeq" id="NP_001074284.1">
    <molecule id="Q0P543-1"/>
    <property type="nucleotide sequence ID" value="NM_001080815.1"/>
</dbReference>
<dbReference type="PDB" id="6O9H">
    <property type="method" value="X-ray"/>
    <property type="resolution" value="2.10 A"/>
    <property type="chains" value="C/D=19-134"/>
</dbReference>
<dbReference type="PDB" id="6O9I">
    <property type="method" value="X-ray"/>
    <property type="resolution" value="2.60 A"/>
    <property type="chains" value="C=19-134"/>
</dbReference>
<dbReference type="PDBsum" id="6O9H"/>
<dbReference type="PDBsum" id="6O9I"/>
<dbReference type="SMR" id="Q0P543"/>
<dbReference type="BioGRID" id="238129">
    <property type="interactions" value="1"/>
</dbReference>
<dbReference type="CORUM" id="Q0P543"/>
<dbReference type="FunCoup" id="Q0P543">
    <property type="interactions" value="1082"/>
</dbReference>
<dbReference type="STRING" id="10090.ENSMUSP00000092384"/>
<dbReference type="BindingDB" id="Q0P543"/>
<dbReference type="ChEMBL" id="CHEMBL4879457"/>
<dbReference type="GuidetoPHARMACOLOGY" id="248"/>
<dbReference type="GlyCosmos" id="Q0P543">
    <property type="glycosylation" value="3 sites, No reported glycans"/>
</dbReference>
<dbReference type="GlyGen" id="Q0P543">
    <property type="glycosylation" value="3 sites"/>
</dbReference>
<dbReference type="PhosphoSitePlus" id="Q0P543"/>
<dbReference type="PaxDb" id="10090-ENSMUSP00000092384"/>
<dbReference type="ProteomicsDB" id="265748">
    <molecule id="Q0P543-1"/>
</dbReference>
<dbReference type="ABCD" id="Q0P543">
    <property type="antibodies" value="2 sequenced antibodies"/>
</dbReference>
<dbReference type="Antibodypedia" id="17982">
    <property type="antibodies" value="621 antibodies from 33 providers"/>
</dbReference>
<dbReference type="Ensembl" id="ENSMUST00000094790.5">
    <molecule id="Q0P543-1"/>
    <property type="protein sequence ID" value="ENSMUSP00000092384.4"/>
    <property type="gene ID" value="ENSMUSG00000030406.8"/>
</dbReference>
<dbReference type="GeneID" id="381853"/>
<dbReference type="KEGG" id="mmu:381853"/>
<dbReference type="UCSC" id="uc009fkw.1">
    <molecule id="Q0P543-1"/>
    <property type="organism name" value="mouse"/>
</dbReference>
<dbReference type="UCSC" id="uc009fkx.1">
    <molecule id="Q0P543-2"/>
    <property type="organism name" value="mouse"/>
</dbReference>
<dbReference type="AGR" id="MGI:1352753"/>
<dbReference type="CTD" id="2696"/>
<dbReference type="MGI" id="MGI:1352753">
    <property type="gene designation" value="Gipr"/>
</dbReference>
<dbReference type="VEuPathDB" id="HostDB:ENSMUSG00000030406"/>
<dbReference type="eggNOG" id="KOG4564">
    <property type="taxonomic scope" value="Eukaryota"/>
</dbReference>
<dbReference type="GeneTree" id="ENSGT00940000161988"/>
<dbReference type="HOGENOM" id="CLU_002753_4_0_1"/>
<dbReference type="InParanoid" id="Q0P543"/>
<dbReference type="OMA" id="LNCPPWR"/>
<dbReference type="OrthoDB" id="5967113at2759"/>
<dbReference type="PhylomeDB" id="Q0P543"/>
<dbReference type="TreeFam" id="TF315710"/>
<dbReference type="Reactome" id="R-MMU-418555">
    <property type="pathway name" value="G alpha (s) signalling events"/>
</dbReference>
<dbReference type="Reactome" id="R-MMU-420092">
    <property type="pathway name" value="Glucagon-type ligand receptors"/>
</dbReference>
<dbReference type="BioGRID-ORCS" id="381853">
    <property type="hits" value="3 hits in 78 CRISPR screens"/>
</dbReference>
<dbReference type="ChiTaRS" id="Gipr">
    <property type="organism name" value="mouse"/>
</dbReference>
<dbReference type="PRO" id="PR:Q0P543"/>
<dbReference type="Proteomes" id="UP000000589">
    <property type="component" value="Chromosome 7"/>
</dbReference>
<dbReference type="RNAct" id="Q0P543">
    <property type="molecule type" value="protein"/>
</dbReference>
<dbReference type="Bgee" id="ENSMUSG00000030406">
    <property type="expression patterns" value="Expressed in cortical plate and 34 other cell types or tissues"/>
</dbReference>
<dbReference type="ExpressionAtlas" id="Q0P543">
    <property type="expression patterns" value="baseline and differential"/>
</dbReference>
<dbReference type="GO" id="GO:0005886">
    <property type="term" value="C:plasma membrane"/>
    <property type="evidence" value="ECO:0000314"/>
    <property type="project" value="MGI"/>
</dbReference>
<dbReference type="GO" id="GO:0016519">
    <property type="term" value="F:gastric inhibitory peptide receptor activity"/>
    <property type="evidence" value="ECO:0000314"/>
    <property type="project" value="MGI"/>
</dbReference>
<dbReference type="GO" id="GO:0120022">
    <property type="term" value="F:glucagon family peptide binding"/>
    <property type="evidence" value="ECO:0007669"/>
    <property type="project" value="Ensembl"/>
</dbReference>
<dbReference type="GO" id="GO:0038023">
    <property type="term" value="F:signaling receptor activity"/>
    <property type="evidence" value="ECO:0000304"/>
    <property type="project" value="MGI"/>
</dbReference>
<dbReference type="GO" id="GO:0007189">
    <property type="term" value="P:adenylate cyclase-activating G protein-coupled receptor signaling pathway"/>
    <property type="evidence" value="ECO:0000315"/>
    <property type="project" value="MGI"/>
</dbReference>
<dbReference type="GO" id="GO:0007166">
    <property type="term" value="P:cell surface receptor signaling pathway"/>
    <property type="evidence" value="ECO:0007669"/>
    <property type="project" value="InterPro"/>
</dbReference>
<dbReference type="GO" id="GO:0002029">
    <property type="term" value="P:desensitization of G protein-coupled receptor signaling pathway"/>
    <property type="evidence" value="ECO:0007669"/>
    <property type="project" value="Ensembl"/>
</dbReference>
<dbReference type="GO" id="GO:0031018">
    <property type="term" value="P:endocrine pancreas development"/>
    <property type="evidence" value="ECO:0000315"/>
    <property type="project" value="MGI"/>
</dbReference>
<dbReference type="GO" id="GO:0007218">
    <property type="term" value="P:neuropeptide signaling pathway"/>
    <property type="evidence" value="ECO:0000304"/>
    <property type="project" value="MGI"/>
</dbReference>
<dbReference type="GO" id="GO:0007204">
    <property type="term" value="P:positive regulation of cytosolic calcium ion concentration"/>
    <property type="evidence" value="ECO:0007669"/>
    <property type="project" value="Ensembl"/>
</dbReference>
<dbReference type="GO" id="GO:0032024">
    <property type="term" value="P:positive regulation of insulin secretion"/>
    <property type="evidence" value="ECO:0000315"/>
    <property type="project" value="MGI"/>
</dbReference>
<dbReference type="GO" id="GO:0048678">
    <property type="term" value="P:response to axon injury"/>
    <property type="evidence" value="ECO:0007669"/>
    <property type="project" value="Ensembl"/>
</dbReference>
<dbReference type="GO" id="GO:0051592">
    <property type="term" value="P:response to calcium ion"/>
    <property type="evidence" value="ECO:0007669"/>
    <property type="project" value="Ensembl"/>
</dbReference>
<dbReference type="GO" id="GO:0070542">
    <property type="term" value="P:response to fatty acid"/>
    <property type="evidence" value="ECO:0007669"/>
    <property type="project" value="Ensembl"/>
</dbReference>
<dbReference type="GO" id="GO:0009749">
    <property type="term" value="P:response to glucose"/>
    <property type="evidence" value="ECO:0007669"/>
    <property type="project" value="Ensembl"/>
</dbReference>
<dbReference type="CDD" id="cd15929">
    <property type="entry name" value="7tmB1_GlucagonR-like"/>
    <property type="match status" value="1"/>
</dbReference>
<dbReference type="FunFam" id="1.20.1070.10:FF:000229">
    <property type="entry name" value="Gastric inhibitory polypeptide receptor"/>
    <property type="match status" value="1"/>
</dbReference>
<dbReference type="FunFam" id="4.10.1240.10:FF:000019">
    <property type="entry name" value="Gastric inhibitory polypeptide receptor"/>
    <property type="match status" value="1"/>
</dbReference>
<dbReference type="Gene3D" id="4.10.1240.10">
    <property type="entry name" value="GPCR, family 2, extracellular hormone receptor domain"/>
    <property type="match status" value="1"/>
</dbReference>
<dbReference type="Gene3D" id="1.20.1070.10">
    <property type="entry name" value="Rhodopsin 7-helix transmembrane proteins"/>
    <property type="match status" value="1"/>
</dbReference>
<dbReference type="InterPro" id="IPR050332">
    <property type="entry name" value="GPCR_2"/>
</dbReference>
<dbReference type="InterPro" id="IPR017981">
    <property type="entry name" value="GPCR_2-like_7TM"/>
</dbReference>
<dbReference type="InterPro" id="IPR036445">
    <property type="entry name" value="GPCR_2_extracell_dom_sf"/>
</dbReference>
<dbReference type="InterPro" id="IPR001879">
    <property type="entry name" value="GPCR_2_extracellular_dom"/>
</dbReference>
<dbReference type="InterPro" id="IPR001749">
    <property type="entry name" value="GPCR_2_GIP_rcpt"/>
</dbReference>
<dbReference type="InterPro" id="IPR000832">
    <property type="entry name" value="GPCR_2_secretin-like"/>
</dbReference>
<dbReference type="InterPro" id="IPR017983">
    <property type="entry name" value="GPCR_2_secretin-like_CS"/>
</dbReference>
<dbReference type="PANTHER" id="PTHR45620:SF5">
    <property type="entry name" value="GASTRIC INHIBITORY POLYPEPTIDE RECEPTOR"/>
    <property type="match status" value="1"/>
</dbReference>
<dbReference type="PANTHER" id="PTHR45620">
    <property type="entry name" value="PDF RECEPTOR-LIKE PROTEIN-RELATED"/>
    <property type="match status" value="1"/>
</dbReference>
<dbReference type="Pfam" id="PF00002">
    <property type="entry name" value="7tm_2"/>
    <property type="match status" value="1"/>
</dbReference>
<dbReference type="Pfam" id="PF02793">
    <property type="entry name" value="HRM"/>
    <property type="match status" value="1"/>
</dbReference>
<dbReference type="PRINTS" id="PR01129">
    <property type="entry name" value="GIPRECEPTOR"/>
</dbReference>
<dbReference type="PRINTS" id="PR00249">
    <property type="entry name" value="GPCRSECRETIN"/>
</dbReference>
<dbReference type="SMART" id="SM00008">
    <property type="entry name" value="HormR"/>
    <property type="match status" value="1"/>
</dbReference>
<dbReference type="SUPFAM" id="SSF81321">
    <property type="entry name" value="Family A G protein-coupled receptor-like"/>
    <property type="match status" value="1"/>
</dbReference>
<dbReference type="SUPFAM" id="SSF111418">
    <property type="entry name" value="Hormone receptor domain"/>
    <property type="match status" value="1"/>
</dbReference>
<dbReference type="PROSITE" id="PS00649">
    <property type="entry name" value="G_PROTEIN_RECEP_F2_1"/>
    <property type="match status" value="1"/>
</dbReference>
<dbReference type="PROSITE" id="PS00650">
    <property type="entry name" value="G_PROTEIN_RECEP_F2_2"/>
    <property type="match status" value="1"/>
</dbReference>
<dbReference type="PROSITE" id="PS50227">
    <property type="entry name" value="G_PROTEIN_RECEP_F2_3"/>
    <property type="match status" value="1"/>
</dbReference>
<dbReference type="PROSITE" id="PS50261">
    <property type="entry name" value="G_PROTEIN_RECEP_F2_4"/>
    <property type="match status" value="1"/>
</dbReference>
<comment type="function">
    <text evidence="1">This is a receptor for GIP. The activity of this receptor is mediated by G proteins which activate adenylyl cyclase.</text>
</comment>
<comment type="subunit">
    <text evidence="1">May form homodimers and heterodimers with GLP1R.</text>
</comment>
<comment type="subcellular location">
    <subcellularLocation>
        <location evidence="4">Cell membrane</location>
        <topology evidence="2">Multi-pass membrane protein</topology>
    </subcellularLocation>
</comment>
<comment type="alternative products">
    <event type="alternative splicing"/>
    <isoform>
        <id>Q0P543-1</id>
        <name>1</name>
        <sequence type="displayed"/>
    </isoform>
    <isoform>
        <id>Q0P543-2</id>
        <name>2</name>
        <sequence type="described" ref="VSP_028433 VSP_028434"/>
    </isoform>
</comment>
<comment type="PTM">
    <text evidence="1">N-glycosylation is required for cell surface expression and lengthens receptor half-life by preventing degradation in the ER.</text>
</comment>
<comment type="similarity">
    <text evidence="4">Belongs to the G-protein coupled receptor 2 family.</text>
</comment>
<proteinExistence type="evidence at protein level"/>
<name>GIPR_MOUSE</name>
<accession>Q0P543</accession>
<accession>Q80UB4</accession>
<keyword id="KW-0002">3D-structure</keyword>
<keyword id="KW-0025">Alternative splicing</keyword>
<keyword id="KW-1003">Cell membrane</keyword>
<keyword id="KW-1015">Disulfide bond</keyword>
<keyword id="KW-0297">G-protein coupled receptor</keyword>
<keyword id="KW-0325">Glycoprotein</keyword>
<keyword id="KW-0472">Membrane</keyword>
<keyword id="KW-0675">Receptor</keyword>
<keyword id="KW-1185">Reference proteome</keyword>
<keyword id="KW-0732">Signal</keyword>
<keyword id="KW-0807">Transducer</keyword>
<keyword id="KW-0812">Transmembrane</keyword>
<keyword id="KW-1133">Transmembrane helix</keyword>
<organism>
    <name type="scientific">Mus musculus</name>
    <name type="common">Mouse</name>
    <dbReference type="NCBI Taxonomy" id="10090"/>
    <lineage>
        <taxon>Eukaryota</taxon>
        <taxon>Metazoa</taxon>
        <taxon>Chordata</taxon>
        <taxon>Craniata</taxon>
        <taxon>Vertebrata</taxon>
        <taxon>Euteleostomi</taxon>
        <taxon>Mammalia</taxon>
        <taxon>Eutheria</taxon>
        <taxon>Euarchontoglires</taxon>
        <taxon>Glires</taxon>
        <taxon>Rodentia</taxon>
        <taxon>Myomorpha</taxon>
        <taxon>Muroidea</taxon>
        <taxon>Muridae</taxon>
        <taxon>Murinae</taxon>
        <taxon>Mus</taxon>
        <taxon>Mus</taxon>
    </lineage>
</organism>
<protein>
    <recommendedName>
        <fullName>Gastric inhibitory polypeptide receptor</fullName>
        <shortName>GIP-R</shortName>
    </recommendedName>
    <alternativeName>
        <fullName>Glucose-dependent insulinotropic polypeptide receptor</fullName>
    </alternativeName>
</protein>
<reference key="1">
    <citation type="journal article" date="2009" name="PLoS Biol.">
        <title>Lineage-specific biology revealed by a finished genome assembly of the mouse.</title>
        <authorList>
            <person name="Church D.M."/>
            <person name="Goodstadt L."/>
            <person name="Hillier L.W."/>
            <person name="Zody M.C."/>
            <person name="Goldstein S."/>
            <person name="She X."/>
            <person name="Bult C.J."/>
            <person name="Agarwala R."/>
            <person name="Cherry J.L."/>
            <person name="DiCuccio M."/>
            <person name="Hlavina W."/>
            <person name="Kapustin Y."/>
            <person name="Meric P."/>
            <person name="Maglott D."/>
            <person name="Birtle Z."/>
            <person name="Marques A.C."/>
            <person name="Graves T."/>
            <person name="Zhou S."/>
            <person name="Teague B."/>
            <person name="Potamousis K."/>
            <person name="Churas C."/>
            <person name="Place M."/>
            <person name="Herschleb J."/>
            <person name="Runnheim R."/>
            <person name="Forrest D."/>
            <person name="Amos-Landgraf J."/>
            <person name="Schwartz D.C."/>
            <person name="Cheng Z."/>
            <person name="Lindblad-Toh K."/>
            <person name="Eichler E.E."/>
            <person name="Ponting C.P."/>
        </authorList>
    </citation>
    <scope>NUCLEOTIDE SEQUENCE [LARGE SCALE GENOMIC DNA]</scope>
    <source>
        <strain>C57BL/6J</strain>
    </source>
</reference>
<reference key="2">
    <citation type="journal article" date="2004" name="Genome Res.">
        <title>The status, quality, and expansion of the NIH full-length cDNA project: the Mammalian Gene Collection (MGC).</title>
        <authorList>
            <consortium name="The MGC Project Team"/>
        </authorList>
    </citation>
    <scope>NUCLEOTIDE SEQUENCE [LARGE SCALE MRNA] (ISOFORM 2)</scope>
    <source>
        <tissue>Brain</tissue>
    </source>
</reference>
<reference key="3">
    <citation type="journal article" date="2003" name="Proc. Natl. Acad. Sci. U.S.A.">
        <title>The G protein-coupled receptor repertoires of human and mouse.</title>
        <authorList>
            <person name="Vassilatis D.K."/>
            <person name="Hohmann J.G."/>
            <person name="Zeng H."/>
            <person name="Li F."/>
            <person name="Ranchalis J.E."/>
            <person name="Mortrud M.T."/>
            <person name="Brown A."/>
            <person name="Rodriguez S.S."/>
            <person name="Weller J.R."/>
            <person name="Wright A.C."/>
            <person name="Bergmann J.E."/>
            <person name="Gaitanaris G.A."/>
        </authorList>
    </citation>
    <scope>NUCLEOTIDE SEQUENCE [LARGE SCALE MRNA] OF 17-178</scope>
</reference>
<reference evidence="5 6" key="4">
    <citation type="journal article" date="2020" name="MAbs">
        <title>Molecular mechanism of an antagonistic antibody against glucose-dependent insulinotropic polypeptide receptor.</title>
        <authorList>
            <person name="Min X."/>
            <person name="Yie J."/>
            <person name="Wang J."/>
            <person name="Chung B.C."/>
            <person name="Huang C.S."/>
            <person name="Xu H."/>
            <person name="Yang J."/>
            <person name="Deng L."/>
            <person name="Lin J."/>
            <person name="Chen Q."/>
            <person name="Abbott C.M."/>
            <person name="Gundel C."/>
            <person name="Thibault S.A."/>
            <person name="Meng T."/>
            <person name="Bates D.L."/>
            <person name="Lloyd D.J."/>
            <person name="Veniant M.M."/>
            <person name="Wang Z."/>
        </authorList>
    </citation>
    <scope>X-RAY CRYSTALLOGRAPHY (2.10 ANGSTROMS) OF 19-134 IN COMPLEX WITH ANTIBODIES</scope>
    <scope>DISULFIDE BONDS</scope>
</reference>
<feature type="signal peptide" evidence="2">
    <location>
        <begin position="1"/>
        <end position="18"/>
    </location>
</feature>
<feature type="chain" id="PRO_0000306251" description="Gastric inhibitory polypeptide receptor">
    <location>
        <begin position="19"/>
        <end position="460"/>
    </location>
</feature>
<feature type="topological domain" description="Extracellular" evidence="4">
    <location>
        <begin position="19"/>
        <end position="134"/>
    </location>
</feature>
<feature type="transmembrane region" description="Helical; Name=1" evidence="2">
    <location>
        <begin position="135"/>
        <end position="155"/>
    </location>
</feature>
<feature type="topological domain" description="Cytoplasmic" evidence="4">
    <location>
        <begin position="156"/>
        <end position="166"/>
    </location>
</feature>
<feature type="transmembrane region" description="Helical; Name=2" evidence="2">
    <location>
        <begin position="167"/>
        <end position="185"/>
    </location>
</feature>
<feature type="topological domain" description="Extracellular" evidence="4">
    <location>
        <begin position="186"/>
        <end position="222"/>
    </location>
</feature>
<feature type="transmembrane region" description="Helical; Name=3" evidence="2">
    <location>
        <begin position="223"/>
        <end position="243"/>
    </location>
</feature>
<feature type="topological domain" description="Cytoplasmic" evidence="4">
    <location>
        <begin position="244"/>
        <end position="255"/>
    </location>
</feature>
<feature type="transmembrane region" description="Helical; Name=4" evidence="2">
    <location>
        <begin position="256"/>
        <end position="276"/>
    </location>
</feature>
<feature type="topological domain" description="Extracellular" evidence="4">
    <location>
        <begin position="277"/>
        <end position="297"/>
    </location>
</feature>
<feature type="transmembrane region" description="Helical; Name=5" evidence="2">
    <location>
        <begin position="298"/>
        <end position="318"/>
    </location>
</feature>
<feature type="topological domain" description="Cytoplasmic" evidence="4">
    <location>
        <begin position="319"/>
        <end position="337"/>
    </location>
</feature>
<feature type="transmembrane region" description="Helical; Name=6" evidence="2">
    <location>
        <begin position="338"/>
        <end position="358"/>
    </location>
</feature>
<feature type="topological domain" description="Extracellular" evidence="4">
    <location>
        <begin position="359"/>
        <end position="370"/>
    </location>
</feature>
<feature type="transmembrane region" description="Helical; Name=7" evidence="2">
    <location>
        <begin position="371"/>
        <end position="391"/>
    </location>
</feature>
<feature type="topological domain" description="Cytoplasmic" evidence="4">
    <location>
        <begin position="392"/>
        <end position="460"/>
    </location>
</feature>
<feature type="glycosylation site" description="N-linked (GlcNAc...) asparagine" evidence="2">
    <location>
        <position position="58"/>
    </location>
</feature>
<feature type="glycosylation site" description="N-linked (GlcNAc...) asparagine" evidence="2">
    <location>
        <position position="68"/>
    </location>
</feature>
<feature type="glycosylation site" description="N-linked (GlcNAc...) asparagine" evidence="2">
    <location>
        <position position="73"/>
    </location>
</feature>
<feature type="disulfide bond" evidence="5 6">
    <location>
        <begin position="42"/>
        <end position="66"/>
    </location>
</feature>
<feature type="disulfide bond" evidence="5 6">
    <location>
        <begin position="57"/>
        <end position="99"/>
    </location>
</feature>
<feature type="disulfide bond" evidence="5 6">
    <location>
        <begin position="80"/>
        <end position="114"/>
    </location>
</feature>
<feature type="splice variant" id="VSP_028433" description="In isoform 2." evidence="3">
    <original>ALAACRTAQIMTQYCVGANYTWL</original>
    <variation>VLHRLLPGGTKTFPIYFRTFPHH</variation>
    <location>
        <begin position="208"/>
        <end position="230"/>
    </location>
</feature>
<feature type="splice variant" id="VSP_028434" description="In isoform 2." evidence="3">
    <location>
        <begin position="231"/>
        <end position="460"/>
    </location>
</feature>
<feature type="sequence conflict" description="In Ref. 3; AAO85080." evidence="4" ref="3">
    <original>A</original>
    <variation>V</variation>
    <location>
        <position position="122"/>
    </location>
</feature>
<feature type="helix" evidence="7">
    <location>
        <begin position="30"/>
        <end position="47"/>
    </location>
</feature>
<feature type="strand" evidence="7">
    <location>
        <begin position="53"/>
        <end position="57"/>
    </location>
</feature>
<feature type="strand" evidence="7">
    <location>
        <begin position="70"/>
        <end position="79"/>
    </location>
</feature>
<feature type="helix" evidence="7">
    <location>
        <begin position="87"/>
        <end position="90"/>
    </location>
</feature>
<feature type="strand" evidence="7">
    <location>
        <begin position="94"/>
        <end position="99"/>
    </location>
</feature>
<feature type="strand" evidence="8">
    <location>
        <begin position="103"/>
        <end position="110"/>
    </location>
</feature>
<feature type="helix" evidence="7">
    <location>
        <begin position="112"/>
        <end position="114"/>
    </location>
</feature>
<feature type="strand" evidence="8">
    <location>
        <begin position="120"/>
        <end position="122"/>
    </location>
</feature>
<feature type="helix" evidence="8">
    <location>
        <begin position="124"/>
        <end position="132"/>
    </location>
</feature>
<sequence>MPLRLLLLLLWLWGLQWAETDSEGQTTTGELYQRWEHYGQECQKMLETTEPPSGLACNGSFDMYACWNYTAANTTARVSCPWYLPWFRQVSAGFVFRQCGSDGQWGSWRDHTQCENPEKNGAFQDQTLILERLQIMYTVGYSLSLTTLLLALLILSLFRRLHCTRNYIHMNLFTSFMLRAAAILTRDQLLPPLGPYTGDQAPTPWNQALAACRTAQIMTQYCVGANYTWLLVEGVYLHHLLVIVGRSEKGHFRCYLLLGWGAPALFVIPWVIVRYLRENTQCWERNEVKAIWWIIRTPILITILINFLIFIRILGILVSKLRTRQMRCPDYRLRLARSTLTLVPLLGVHEVVFAPVTEEQVEGSLRFAKLAFEIFLSSFQGFLVSVLYCFINKEVQSEIRQGWRHRRLRLSLQEQRPRPHQELAPRAVPLSSACREAAVGNALPSGMLHVPGDEVLESYC</sequence>
<evidence type="ECO:0000250" key="1">
    <source>
        <dbReference type="UniProtKB" id="P48546"/>
    </source>
</evidence>
<evidence type="ECO:0000255" key="2"/>
<evidence type="ECO:0000303" key="3">
    <source>
    </source>
</evidence>
<evidence type="ECO:0000305" key="4"/>
<evidence type="ECO:0007744" key="5">
    <source>
        <dbReference type="PDB" id="6O9H"/>
    </source>
</evidence>
<evidence type="ECO:0007744" key="6">
    <source>
        <dbReference type="PDB" id="6O9I"/>
    </source>
</evidence>
<evidence type="ECO:0007829" key="7">
    <source>
        <dbReference type="PDB" id="6O9H"/>
    </source>
</evidence>
<evidence type="ECO:0007829" key="8">
    <source>
        <dbReference type="PDB" id="6O9I"/>
    </source>
</evidence>